<accession>P51240</accession>
<dbReference type="EMBL" id="U38804">
    <property type="protein sequence ID" value="AAC08126.1"/>
    <property type="molecule type" value="Genomic_DNA"/>
</dbReference>
<dbReference type="PIR" id="S73161">
    <property type="entry name" value="S73161"/>
</dbReference>
<dbReference type="RefSeq" id="NP_053850.1">
    <property type="nucleotide sequence ID" value="NC_000925.1"/>
</dbReference>
<dbReference type="SMR" id="P51240"/>
<dbReference type="GeneID" id="809869"/>
<dbReference type="GO" id="GO:0009507">
    <property type="term" value="C:chloroplast"/>
    <property type="evidence" value="ECO:0007669"/>
    <property type="project" value="UniProtKB-SubCell"/>
</dbReference>
<dbReference type="GO" id="GO:0016226">
    <property type="term" value="P:iron-sulfur cluster assembly"/>
    <property type="evidence" value="ECO:0007669"/>
    <property type="project" value="InterPro"/>
</dbReference>
<dbReference type="InterPro" id="IPR055346">
    <property type="entry name" value="Fe-S_cluster_assembly_SufBD"/>
</dbReference>
<dbReference type="InterPro" id="IPR010231">
    <property type="entry name" value="SUF_FeS_clus_asmbl_SufB"/>
</dbReference>
<dbReference type="InterPro" id="IPR000825">
    <property type="entry name" value="SUF_FeS_clus_asmbl_SufBD_core"/>
</dbReference>
<dbReference type="InterPro" id="IPR037284">
    <property type="entry name" value="SUF_FeS_clus_asmbl_SufBD_sf"/>
</dbReference>
<dbReference type="InterPro" id="IPR045595">
    <property type="entry name" value="SufBD_N"/>
</dbReference>
<dbReference type="NCBIfam" id="NF008773">
    <property type="entry name" value="PRK11814.1"/>
    <property type="match status" value="1"/>
</dbReference>
<dbReference type="NCBIfam" id="TIGR01980">
    <property type="entry name" value="sufB"/>
    <property type="match status" value="1"/>
</dbReference>
<dbReference type="PANTHER" id="PTHR30508">
    <property type="entry name" value="FES CLUSTER ASSEMBLY PROTEIN SUF"/>
    <property type="match status" value="1"/>
</dbReference>
<dbReference type="PANTHER" id="PTHR30508:SF1">
    <property type="entry name" value="UPF0051 PROTEIN ABCI8, CHLOROPLASTIC-RELATED"/>
    <property type="match status" value="1"/>
</dbReference>
<dbReference type="Pfam" id="PF01458">
    <property type="entry name" value="SUFBD_core"/>
    <property type="match status" value="1"/>
</dbReference>
<dbReference type="Pfam" id="PF19295">
    <property type="entry name" value="SufBD_N"/>
    <property type="match status" value="1"/>
</dbReference>
<dbReference type="SUPFAM" id="SSF101960">
    <property type="entry name" value="Stabilizer of iron transporter SufD"/>
    <property type="match status" value="1"/>
</dbReference>
<reference key="1">
    <citation type="journal article" date="1995" name="Plant Mol. Biol. Rep.">
        <title>Complete nucleotide sequence of the Porphyra purpurea chloroplast genome.</title>
        <authorList>
            <person name="Reith M.E."/>
            <person name="Munholland J."/>
        </authorList>
    </citation>
    <scope>NUCLEOTIDE SEQUENCE [LARGE SCALE GENOMIC DNA]</scope>
    <source>
        <strain>Avonport</strain>
    </source>
</reference>
<sequence>MVNTQNQISQTSDLDYIVNQPYKYGFTTSVESEQFPRGISREVVKLISKKKNEPEYLLNFRLKAYEKWTKMKNPKWAHLKHPNIDFNSIIYYAVPKLKKELNSLDEVDPEILDTFNKLGISLNEQKRLSNVAVDAVFDSVSIATTFKKELAEAGVIFCSISEAIRNYPDLIQKYLGTVVPSGDNYFAALNSAVFSDGSFCYIPPDTVCPLELSTYFRINNEESGQFERTLIVADRGSKVSYLEGCTAPQYDTNQLHAAIVELIALDDAEIKYSTVQNWYAGNKDGKGGIYNFVTKRGLCSGKNSKISWTQVETGSAITWKYPGCILAGDNSQGEFYSVALTNNYQEADTGTKMIHIGNNTKSKIISKGISAGKSKNSYRGLVKIGPQSFNSRNYSQCDSLLIGQSSQANTFPYIQVQNPTAKVEHEASTSKISEDQIFYFLQRGINLEESVSLMISGFCKDVFNELPMEFAVEADRLLSLKLEGTVG</sequence>
<keyword id="KW-0150">Chloroplast</keyword>
<keyword id="KW-0934">Plastid</keyword>
<protein>
    <recommendedName>
        <fullName>Iron-sulfur cluster assembly SufBD family protein ycf24</fullName>
    </recommendedName>
    <alternativeName>
        <fullName>ORF487</fullName>
    </alternativeName>
</protein>
<gene>
    <name type="primary">ycf24</name>
</gene>
<proteinExistence type="inferred from homology"/>
<organism>
    <name type="scientific">Porphyra purpurea</name>
    <name type="common">Red seaweed</name>
    <name type="synonym">Ulva purpurea</name>
    <dbReference type="NCBI Taxonomy" id="2787"/>
    <lineage>
        <taxon>Eukaryota</taxon>
        <taxon>Rhodophyta</taxon>
        <taxon>Bangiophyceae</taxon>
        <taxon>Bangiales</taxon>
        <taxon>Bangiaceae</taxon>
        <taxon>Porphyra</taxon>
    </lineage>
</organism>
<feature type="chain" id="PRO_0000147393" description="Iron-sulfur cluster assembly SufBD family protein ycf24">
    <location>
        <begin position="1"/>
        <end position="487"/>
    </location>
</feature>
<geneLocation type="chloroplast"/>
<name>YCF24_PORPU</name>
<evidence type="ECO:0000305" key="1"/>
<comment type="subcellular location">
    <subcellularLocation>
        <location>Plastid</location>
        <location>Chloroplast</location>
    </subcellularLocation>
</comment>
<comment type="similarity">
    <text evidence="1">Belongs to the iron-sulfur cluster assembly SufBD family.</text>
</comment>